<protein>
    <recommendedName>
        <fullName evidence="1">Acyl carrier protein</fullName>
        <shortName evidence="1">ACP</shortName>
    </recommendedName>
</protein>
<reference key="1">
    <citation type="journal article" date="2005" name="Genome Res.">
        <title>Genome sequence of Blochmannia pennsylvanicus indicates parallel evolutionary trends among bacterial mutualists of insects.</title>
        <authorList>
            <person name="Degnan P.H."/>
            <person name="Lazarus A.B."/>
            <person name="Wernegreen J.J."/>
        </authorList>
    </citation>
    <scope>NUCLEOTIDE SEQUENCE [LARGE SCALE GENOMIC DNA]</scope>
    <source>
        <strain>BPEN</strain>
    </source>
</reference>
<name>ACP_BLOPB</name>
<dbReference type="EMBL" id="CP000016">
    <property type="protein sequence ID" value="AAZ41039.1"/>
    <property type="molecule type" value="Genomic_DNA"/>
</dbReference>
<dbReference type="RefSeq" id="WP_011282948.1">
    <property type="nucleotide sequence ID" value="NC_007292.1"/>
</dbReference>
<dbReference type="SMR" id="Q494E2"/>
<dbReference type="STRING" id="291272.BPEN_415"/>
<dbReference type="KEGG" id="bpn:BPEN_415"/>
<dbReference type="eggNOG" id="COG0236">
    <property type="taxonomic scope" value="Bacteria"/>
</dbReference>
<dbReference type="HOGENOM" id="CLU_108696_5_1_6"/>
<dbReference type="OrthoDB" id="9804551at2"/>
<dbReference type="UniPathway" id="UPA00094"/>
<dbReference type="Proteomes" id="UP000007794">
    <property type="component" value="Chromosome"/>
</dbReference>
<dbReference type="GO" id="GO:0005829">
    <property type="term" value="C:cytosol"/>
    <property type="evidence" value="ECO:0007669"/>
    <property type="project" value="TreeGrafter"/>
</dbReference>
<dbReference type="GO" id="GO:0016020">
    <property type="term" value="C:membrane"/>
    <property type="evidence" value="ECO:0007669"/>
    <property type="project" value="GOC"/>
</dbReference>
<dbReference type="GO" id="GO:0000035">
    <property type="term" value="F:acyl binding"/>
    <property type="evidence" value="ECO:0007669"/>
    <property type="project" value="TreeGrafter"/>
</dbReference>
<dbReference type="GO" id="GO:0000036">
    <property type="term" value="F:acyl carrier activity"/>
    <property type="evidence" value="ECO:0007669"/>
    <property type="project" value="UniProtKB-UniRule"/>
</dbReference>
<dbReference type="GO" id="GO:0009245">
    <property type="term" value="P:lipid A biosynthetic process"/>
    <property type="evidence" value="ECO:0007669"/>
    <property type="project" value="TreeGrafter"/>
</dbReference>
<dbReference type="FunFam" id="1.10.1200.10:FF:000001">
    <property type="entry name" value="Acyl carrier protein"/>
    <property type="match status" value="1"/>
</dbReference>
<dbReference type="Gene3D" id="1.10.1200.10">
    <property type="entry name" value="ACP-like"/>
    <property type="match status" value="1"/>
</dbReference>
<dbReference type="HAMAP" id="MF_01217">
    <property type="entry name" value="Acyl_carrier"/>
    <property type="match status" value="1"/>
</dbReference>
<dbReference type="InterPro" id="IPR003231">
    <property type="entry name" value="ACP"/>
</dbReference>
<dbReference type="InterPro" id="IPR036736">
    <property type="entry name" value="ACP-like_sf"/>
</dbReference>
<dbReference type="InterPro" id="IPR009081">
    <property type="entry name" value="PP-bd_ACP"/>
</dbReference>
<dbReference type="InterPro" id="IPR006162">
    <property type="entry name" value="Ppantetheine_attach_site"/>
</dbReference>
<dbReference type="NCBIfam" id="TIGR00517">
    <property type="entry name" value="acyl_carrier"/>
    <property type="match status" value="1"/>
</dbReference>
<dbReference type="NCBIfam" id="NF002148">
    <property type="entry name" value="PRK00982.1-2"/>
    <property type="match status" value="1"/>
</dbReference>
<dbReference type="NCBIfam" id="NF002149">
    <property type="entry name" value="PRK00982.1-3"/>
    <property type="match status" value="1"/>
</dbReference>
<dbReference type="NCBIfam" id="NF002150">
    <property type="entry name" value="PRK00982.1-4"/>
    <property type="match status" value="1"/>
</dbReference>
<dbReference type="NCBIfam" id="NF002151">
    <property type="entry name" value="PRK00982.1-5"/>
    <property type="match status" value="1"/>
</dbReference>
<dbReference type="PANTHER" id="PTHR20863">
    <property type="entry name" value="ACYL CARRIER PROTEIN"/>
    <property type="match status" value="1"/>
</dbReference>
<dbReference type="PANTHER" id="PTHR20863:SF76">
    <property type="entry name" value="CARRIER DOMAIN-CONTAINING PROTEIN"/>
    <property type="match status" value="1"/>
</dbReference>
<dbReference type="Pfam" id="PF00550">
    <property type="entry name" value="PP-binding"/>
    <property type="match status" value="1"/>
</dbReference>
<dbReference type="SUPFAM" id="SSF47336">
    <property type="entry name" value="ACP-like"/>
    <property type="match status" value="1"/>
</dbReference>
<dbReference type="PROSITE" id="PS50075">
    <property type="entry name" value="CARRIER"/>
    <property type="match status" value="1"/>
</dbReference>
<dbReference type="PROSITE" id="PS00012">
    <property type="entry name" value="PHOSPHOPANTETHEINE"/>
    <property type="match status" value="1"/>
</dbReference>
<feature type="chain" id="PRO_1000066561" description="Acyl carrier protein">
    <location>
        <begin position="1"/>
        <end position="83"/>
    </location>
</feature>
<feature type="domain" description="Carrier" evidence="2">
    <location>
        <begin position="2"/>
        <end position="77"/>
    </location>
</feature>
<feature type="modified residue" description="O-(pantetheine 4'-phosphoryl)serine" evidence="2">
    <location>
        <position position="37"/>
    </location>
</feature>
<proteinExistence type="inferred from homology"/>
<organism>
    <name type="scientific">Blochmanniella pennsylvanica (strain BPEN)</name>
    <dbReference type="NCBI Taxonomy" id="291272"/>
    <lineage>
        <taxon>Bacteria</taxon>
        <taxon>Pseudomonadati</taxon>
        <taxon>Pseudomonadota</taxon>
        <taxon>Gammaproteobacteria</taxon>
        <taxon>Enterobacterales</taxon>
        <taxon>Enterobacteriaceae</taxon>
        <taxon>ant endosymbionts</taxon>
        <taxon>Candidatus Blochmanniella</taxon>
    </lineage>
</organism>
<sequence length="83" mass="9237">MSTIEEKVKTIISEQLGVKQEEVVNHASFVEDLGADSLDTVELVMALEEEFDTEIPDEEAEKITTVQAAIDFISNSHQQNKSN</sequence>
<gene>
    <name evidence="1" type="primary">acpP</name>
    <name type="ordered locus">BPEN_415</name>
</gene>
<accession>Q494E2</accession>
<keyword id="KW-0963">Cytoplasm</keyword>
<keyword id="KW-0275">Fatty acid biosynthesis</keyword>
<keyword id="KW-0276">Fatty acid metabolism</keyword>
<keyword id="KW-0444">Lipid biosynthesis</keyword>
<keyword id="KW-0443">Lipid metabolism</keyword>
<keyword id="KW-0596">Phosphopantetheine</keyword>
<keyword id="KW-0597">Phosphoprotein</keyword>
<keyword id="KW-1185">Reference proteome</keyword>
<evidence type="ECO:0000255" key="1">
    <source>
        <dbReference type="HAMAP-Rule" id="MF_01217"/>
    </source>
</evidence>
<evidence type="ECO:0000255" key="2">
    <source>
        <dbReference type="PROSITE-ProRule" id="PRU00258"/>
    </source>
</evidence>
<comment type="function">
    <text evidence="1">Carrier of the growing fatty acid chain in fatty acid biosynthesis.</text>
</comment>
<comment type="pathway">
    <text evidence="1">Lipid metabolism; fatty acid biosynthesis.</text>
</comment>
<comment type="subcellular location">
    <subcellularLocation>
        <location evidence="1">Cytoplasm</location>
    </subcellularLocation>
</comment>
<comment type="PTM">
    <text evidence="1">4'-phosphopantetheine is transferred from CoA to a specific serine of apo-ACP by AcpS. This modification is essential for activity because fatty acids are bound in thioester linkage to the sulfhydryl of the prosthetic group.</text>
</comment>
<comment type="similarity">
    <text evidence="1">Belongs to the acyl carrier protein (ACP) family.</text>
</comment>